<sequence length="119" mass="13747">MPTQHTFSRELRLLTPEHFKRVFAEPVRAASPQITLLACPNTLEHPRLGLAVPKKALKRAVWRNRVKRVVRESFRLNQANLPAIDIVVIAKAGVKEMDNEELFKLLEKLWRTLSRRCNG</sequence>
<evidence type="ECO:0000255" key="1">
    <source>
        <dbReference type="HAMAP-Rule" id="MF_00227"/>
    </source>
</evidence>
<reference key="1">
    <citation type="journal article" date="2006" name="J. Bacteriol.">
        <title>Genome sequence of Aeromonas hydrophila ATCC 7966T: jack of all trades.</title>
        <authorList>
            <person name="Seshadri R."/>
            <person name="Joseph S.W."/>
            <person name="Chopra A.K."/>
            <person name="Sha J."/>
            <person name="Shaw J."/>
            <person name="Graf J."/>
            <person name="Haft D.H."/>
            <person name="Wu M."/>
            <person name="Ren Q."/>
            <person name="Rosovitz M.J."/>
            <person name="Madupu R."/>
            <person name="Tallon L."/>
            <person name="Kim M."/>
            <person name="Jin S."/>
            <person name="Vuong H."/>
            <person name="Stine O.C."/>
            <person name="Ali A."/>
            <person name="Horneman A.J."/>
            <person name="Heidelberg J.F."/>
        </authorList>
    </citation>
    <scope>NUCLEOTIDE SEQUENCE [LARGE SCALE GENOMIC DNA]</scope>
    <source>
        <strain>ATCC 7966 / DSM 30187 / BCRC 13018 / CCUG 14551 / JCM 1027 / KCTC 2358 / NCIMB 9240 / NCTC 8049</strain>
    </source>
</reference>
<feature type="chain" id="PRO_1000021370" description="Ribonuclease P protein component">
    <location>
        <begin position="1"/>
        <end position="119"/>
    </location>
</feature>
<organism>
    <name type="scientific">Aeromonas hydrophila subsp. hydrophila (strain ATCC 7966 / DSM 30187 / BCRC 13018 / CCUG 14551 / JCM 1027 / KCTC 2358 / NCIMB 9240 / NCTC 8049)</name>
    <dbReference type="NCBI Taxonomy" id="380703"/>
    <lineage>
        <taxon>Bacteria</taxon>
        <taxon>Pseudomonadati</taxon>
        <taxon>Pseudomonadota</taxon>
        <taxon>Gammaproteobacteria</taxon>
        <taxon>Aeromonadales</taxon>
        <taxon>Aeromonadaceae</taxon>
        <taxon>Aeromonas</taxon>
    </lineage>
</organism>
<name>RNPA_AERHH</name>
<proteinExistence type="inferred from homology"/>
<keyword id="KW-0255">Endonuclease</keyword>
<keyword id="KW-0378">Hydrolase</keyword>
<keyword id="KW-0540">Nuclease</keyword>
<keyword id="KW-1185">Reference proteome</keyword>
<keyword id="KW-0694">RNA-binding</keyword>
<keyword id="KW-0819">tRNA processing</keyword>
<comment type="function">
    <text evidence="1">RNaseP catalyzes the removal of the 5'-leader sequence from pre-tRNA to produce the mature 5'-terminus. It can also cleave other RNA substrates such as 4.5S RNA. The protein component plays an auxiliary but essential role in vivo by binding to the 5'-leader sequence and broadening the substrate specificity of the ribozyme.</text>
</comment>
<comment type="catalytic activity">
    <reaction evidence="1">
        <text>Endonucleolytic cleavage of RNA, removing 5'-extranucleotides from tRNA precursor.</text>
        <dbReference type="EC" id="3.1.26.5"/>
    </reaction>
</comment>
<comment type="subunit">
    <text evidence="1">Consists of a catalytic RNA component (M1 or rnpB) and a protein subunit.</text>
</comment>
<comment type="similarity">
    <text evidence="1">Belongs to the RnpA family.</text>
</comment>
<dbReference type="EC" id="3.1.26.5" evidence="1"/>
<dbReference type="EMBL" id="CP000462">
    <property type="protein sequence ID" value="ABK38565.1"/>
    <property type="molecule type" value="Genomic_DNA"/>
</dbReference>
<dbReference type="RefSeq" id="WP_011707927.1">
    <property type="nucleotide sequence ID" value="NC_008570.1"/>
</dbReference>
<dbReference type="RefSeq" id="YP_858700.1">
    <property type="nucleotide sequence ID" value="NC_008570.1"/>
</dbReference>
<dbReference type="SMR" id="A0KQZ9"/>
<dbReference type="STRING" id="380703.AHA_4283"/>
<dbReference type="EnsemblBacteria" id="ABK38565">
    <property type="protein sequence ID" value="ABK38565"/>
    <property type="gene ID" value="AHA_4283"/>
</dbReference>
<dbReference type="GeneID" id="97221545"/>
<dbReference type="KEGG" id="aha:AHA_4283"/>
<dbReference type="PATRIC" id="fig|380703.7.peg.4232"/>
<dbReference type="eggNOG" id="COG0594">
    <property type="taxonomic scope" value="Bacteria"/>
</dbReference>
<dbReference type="HOGENOM" id="CLU_117179_11_0_6"/>
<dbReference type="OrthoDB" id="9796422at2"/>
<dbReference type="Proteomes" id="UP000000756">
    <property type="component" value="Chromosome"/>
</dbReference>
<dbReference type="GO" id="GO:0030677">
    <property type="term" value="C:ribonuclease P complex"/>
    <property type="evidence" value="ECO:0007669"/>
    <property type="project" value="TreeGrafter"/>
</dbReference>
<dbReference type="GO" id="GO:0042781">
    <property type="term" value="F:3'-tRNA processing endoribonuclease activity"/>
    <property type="evidence" value="ECO:0007669"/>
    <property type="project" value="TreeGrafter"/>
</dbReference>
<dbReference type="GO" id="GO:0004526">
    <property type="term" value="F:ribonuclease P activity"/>
    <property type="evidence" value="ECO:0007669"/>
    <property type="project" value="UniProtKB-UniRule"/>
</dbReference>
<dbReference type="GO" id="GO:0000049">
    <property type="term" value="F:tRNA binding"/>
    <property type="evidence" value="ECO:0007669"/>
    <property type="project" value="UniProtKB-UniRule"/>
</dbReference>
<dbReference type="GO" id="GO:0001682">
    <property type="term" value="P:tRNA 5'-leader removal"/>
    <property type="evidence" value="ECO:0007669"/>
    <property type="project" value="UniProtKB-UniRule"/>
</dbReference>
<dbReference type="Gene3D" id="3.30.230.10">
    <property type="match status" value="1"/>
</dbReference>
<dbReference type="HAMAP" id="MF_00227">
    <property type="entry name" value="RNase_P"/>
    <property type="match status" value="1"/>
</dbReference>
<dbReference type="InterPro" id="IPR020568">
    <property type="entry name" value="Ribosomal_Su5_D2-typ_SF"/>
</dbReference>
<dbReference type="InterPro" id="IPR014721">
    <property type="entry name" value="Ribsml_uS5_D2-typ_fold_subgr"/>
</dbReference>
<dbReference type="InterPro" id="IPR000100">
    <property type="entry name" value="RNase_P"/>
</dbReference>
<dbReference type="InterPro" id="IPR020539">
    <property type="entry name" value="RNase_P_CS"/>
</dbReference>
<dbReference type="NCBIfam" id="TIGR00188">
    <property type="entry name" value="rnpA"/>
    <property type="match status" value="1"/>
</dbReference>
<dbReference type="PANTHER" id="PTHR33992">
    <property type="entry name" value="RIBONUCLEASE P PROTEIN COMPONENT"/>
    <property type="match status" value="1"/>
</dbReference>
<dbReference type="PANTHER" id="PTHR33992:SF1">
    <property type="entry name" value="RIBONUCLEASE P PROTEIN COMPONENT"/>
    <property type="match status" value="1"/>
</dbReference>
<dbReference type="Pfam" id="PF00825">
    <property type="entry name" value="Ribonuclease_P"/>
    <property type="match status" value="1"/>
</dbReference>
<dbReference type="SUPFAM" id="SSF54211">
    <property type="entry name" value="Ribosomal protein S5 domain 2-like"/>
    <property type="match status" value="1"/>
</dbReference>
<dbReference type="PROSITE" id="PS00648">
    <property type="entry name" value="RIBONUCLEASE_P"/>
    <property type="match status" value="1"/>
</dbReference>
<protein>
    <recommendedName>
        <fullName evidence="1">Ribonuclease P protein component</fullName>
        <shortName evidence="1">RNase P protein</shortName>
        <shortName evidence="1">RNaseP protein</shortName>
        <ecNumber evidence="1">3.1.26.5</ecNumber>
    </recommendedName>
    <alternativeName>
        <fullName evidence="1">Protein C5</fullName>
    </alternativeName>
</protein>
<gene>
    <name evidence="1" type="primary">rnpA</name>
    <name type="ordered locus">AHA_4283</name>
</gene>
<accession>A0KQZ9</accession>